<gene>
    <name evidence="1" type="primary">pheT</name>
    <name type="ordered locus">PH0657</name>
</gene>
<dbReference type="EC" id="6.1.1.20" evidence="1"/>
<dbReference type="EMBL" id="BA000001">
    <property type="protein sequence ID" value="BAA29748.1"/>
    <property type="molecule type" value="Genomic_DNA"/>
</dbReference>
<dbReference type="PIR" id="B71111">
    <property type="entry name" value="B71111"/>
</dbReference>
<dbReference type="RefSeq" id="WP_010884752.1">
    <property type="nucleotide sequence ID" value="NC_000961.1"/>
</dbReference>
<dbReference type="PDB" id="2CXI">
    <property type="method" value="X-ray"/>
    <property type="resolution" value="1.94 A"/>
    <property type="chains" value="A/B/C=1-348"/>
</dbReference>
<dbReference type="PDBsum" id="2CXI"/>
<dbReference type="SMR" id="O73984"/>
<dbReference type="STRING" id="70601.gene:9377601"/>
<dbReference type="EnsemblBacteria" id="BAA29748">
    <property type="protein sequence ID" value="BAA29748"/>
    <property type="gene ID" value="BAA29748"/>
</dbReference>
<dbReference type="GeneID" id="1442987"/>
<dbReference type="KEGG" id="pho:PH0657"/>
<dbReference type="eggNOG" id="arCOG00412">
    <property type="taxonomic scope" value="Archaea"/>
</dbReference>
<dbReference type="OrthoDB" id="10073at2157"/>
<dbReference type="BRENDA" id="6.1.1.20">
    <property type="organism ID" value="5244"/>
</dbReference>
<dbReference type="EvolutionaryTrace" id="O73984"/>
<dbReference type="Proteomes" id="UP000000752">
    <property type="component" value="Chromosome"/>
</dbReference>
<dbReference type="GO" id="GO:0009328">
    <property type="term" value="C:phenylalanine-tRNA ligase complex"/>
    <property type="evidence" value="ECO:0007669"/>
    <property type="project" value="TreeGrafter"/>
</dbReference>
<dbReference type="GO" id="GO:0005524">
    <property type="term" value="F:ATP binding"/>
    <property type="evidence" value="ECO:0007669"/>
    <property type="project" value="UniProtKB-UniRule"/>
</dbReference>
<dbReference type="GO" id="GO:0000287">
    <property type="term" value="F:magnesium ion binding"/>
    <property type="evidence" value="ECO:0007669"/>
    <property type="project" value="InterPro"/>
</dbReference>
<dbReference type="GO" id="GO:0004826">
    <property type="term" value="F:phenylalanine-tRNA ligase activity"/>
    <property type="evidence" value="ECO:0007669"/>
    <property type="project" value="UniProtKB-UniRule"/>
</dbReference>
<dbReference type="GO" id="GO:0003723">
    <property type="term" value="F:RNA binding"/>
    <property type="evidence" value="ECO:0007669"/>
    <property type="project" value="InterPro"/>
</dbReference>
<dbReference type="GO" id="GO:0006432">
    <property type="term" value="P:phenylalanyl-tRNA aminoacylation"/>
    <property type="evidence" value="ECO:0007669"/>
    <property type="project" value="UniProtKB-UniRule"/>
</dbReference>
<dbReference type="CDD" id="cd00769">
    <property type="entry name" value="PheRS_beta_core"/>
    <property type="match status" value="1"/>
</dbReference>
<dbReference type="FunFam" id="3.30.56.10:FF:000011">
    <property type="entry name" value="Phenylalanine--tRNA ligase beta subunit"/>
    <property type="match status" value="1"/>
</dbReference>
<dbReference type="FunFam" id="3.30.930.10:FF:000132">
    <property type="entry name" value="Phenylalanine--tRNA ligase beta subunit"/>
    <property type="match status" value="1"/>
</dbReference>
<dbReference type="FunFam" id="3.50.40.10:FF:000003">
    <property type="entry name" value="Phenylalanine--tRNA ligase beta subunit"/>
    <property type="match status" value="1"/>
</dbReference>
<dbReference type="Gene3D" id="3.30.56.10">
    <property type="match status" value="2"/>
</dbReference>
<dbReference type="Gene3D" id="3.30.930.10">
    <property type="entry name" value="Bira Bifunctional Protein, Domain 2"/>
    <property type="match status" value="1"/>
</dbReference>
<dbReference type="Gene3D" id="3.50.40.10">
    <property type="entry name" value="Phenylalanyl-trna Synthetase, Chain B, domain 3"/>
    <property type="match status" value="1"/>
</dbReference>
<dbReference type="HAMAP" id="MF_00284">
    <property type="entry name" value="Phe_tRNA_synth_beta2"/>
    <property type="match status" value="1"/>
</dbReference>
<dbReference type="InterPro" id="IPR045864">
    <property type="entry name" value="aa-tRNA-synth_II/BPL/LPL"/>
</dbReference>
<dbReference type="InterPro" id="IPR005146">
    <property type="entry name" value="B3/B4_tRNA-bd"/>
</dbReference>
<dbReference type="InterPro" id="IPR009061">
    <property type="entry name" value="DNA-bd_dom_put_sf"/>
</dbReference>
<dbReference type="InterPro" id="IPR045060">
    <property type="entry name" value="Phe-tRNA-ligase_IIc_bsu"/>
</dbReference>
<dbReference type="InterPro" id="IPR004531">
    <property type="entry name" value="Phe-tRNA-synth_IIc_bsu_arc_euk"/>
</dbReference>
<dbReference type="InterPro" id="IPR020825">
    <property type="entry name" value="Phe-tRNA_synthase-like_B3/B4"/>
</dbReference>
<dbReference type="InterPro" id="IPR022918">
    <property type="entry name" value="Phe_tRNA_ligase_beta2_arc"/>
</dbReference>
<dbReference type="InterPro" id="IPR041616">
    <property type="entry name" value="PheRS_beta_core"/>
</dbReference>
<dbReference type="InterPro" id="IPR005147">
    <property type="entry name" value="tRNA_synthase_B5-dom"/>
</dbReference>
<dbReference type="NCBIfam" id="TIGR00471">
    <property type="entry name" value="pheT_arch"/>
    <property type="match status" value="1"/>
</dbReference>
<dbReference type="PANTHER" id="PTHR10947:SF0">
    <property type="entry name" value="PHENYLALANINE--TRNA LIGASE BETA SUBUNIT"/>
    <property type="match status" value="1"/>
</dbReference>
<dbReference type="PANTHER" id="PTHR10947">
    <property type="entry name" value="PHENYLALANYL-TRNA SYNTHETASE BETA CHAIN AND LEUCINE-RICH REPEAT-CONTAINING PROTEIN 47"/>
    <property type="match status" value="1"/>
</dbReference>
<dbReference type="Pfam" id="PF03483">
    <property type="entry name" value="B3_4"/>
    <property type="match status" value="1"/>
</dbReference>
<dbReference type="Pfam" id="PF03484">
    <property type="entry name" value="B5"/>
    <property type="match status" value="1"/>
</dbReference>
<dbReference type="Pfam" id="PF17759">
    <property type="entry name" value="tRNA_synthFbeta"/>
    <property type="match status" value="1"/>
</dbReference>
<dbReference type="SMART" id="SM00873">
    <property type="entry name" value="B3_4"/>
    <property type="match status" value="1"/>
</dbReference>
<dbReference type="SMART" id="SM00874">
    <property type="entry name" value="B5"/>
    <property type="match status" value="1"/>
</dbReference>
<dbReference type="SUPFAM" id="SSF55681">
    <property type="entry name" value="Class II aaRS and biotin synthetases"/>
    <property type="match status" value="1"/>
</dbReference>
<dbReference type="SUPFAM" id="SSF56037">
    <property type="entry name" value="PheT/TilS domain"/>
    <property type="match status" value="1"/>
</dbReference>
<dbReference type="SUPFAM" id="SSF46955">
    <property type="entry name" value="Putative DNA-binding domain"/>
    <property type="match status" value="2"/>
</dbReference>
<dbReference type="PROSITE" id="PS51483">
    <property type="entry name" value="B5"/>
    <property type="match status" value="1"/>
</dbReference>
<name>SYFB_PYRHO</name>
<keyword id="KW-0002">3D-structure</keyword>
<keyword id="KW-0030">Aminoacyl-tRNA synthetase</keyword>
<keyword id="KW-0067">ATP-binding</keyword>
<keyword id="KW-0963">Cytoplasm</keyword>
<keyword id="KW-0436">Ligase</keyword>
<keyword id="KW-0460">Magnesium</keyword>
<keyword id="KW-0479">Metal-binding</keyword>
<keyword id="KW-0547">Nucleotide-binding</keyword>
<keyword id="KW-0648">Protein biosynthesis</keyword>
<protein>
    <recommendedName>
        <fullName evidence="1">Phenylalanine--tRNA ligase beta subunit</fullName>
        <ecNumber evidence="1">6.1.1.20</ecNumber>
    </recommendedName>
    <alternativeName>
        <fullName evidence="1">Phenylalanyl-tRNA synthetase beta subunit</fullName>
        <shortName evidence="1">PheRS</shortName>
    </alternativeName>
</protein>
<evidence type="ECO:0000255" key="1">
    <source>
        <dbReference type="HAMAP-Rule" id="MF_00284"/>
    </source>
</evidence>
<evidence type="ECO:0000305" key="2"/>
<evidence type="ECO:0007829" key="3">
    <source>
        <dbReference type="PDB" id="2CXI"/>
    </source>
</evidence>
<organism>
    <name type="scientific">Pyrococcus horikoshii (strain ATCC 700860 / DSM 12428 / JCM 9974 / NBRC 100139 / OT-3)</name>
    <dbReference type="NCBI Taxonomy" id="70601"/>
    <lineage>
        <taxon>Archaea</taxon>
        <taxon>Methanobacteriati</taxon>
        <taxon>Methanobacteriota</taxon>
        <taxon>Thermococci</taxon>
        <taxon>Thermococcales</taxon>
        <taxon>Thermococcaceae</taxon>
        <taxon>Pyrococcus</taxon>
    </lineage>
</organism>
<accession>O73984</accession>
<reference key="1">
    <citation type="journal article" date="1998" name="DNA Res.">
        <title>Complete sequence and gene organization of the genome of a hyper-thermophilic archaebacterium, Pyrococcus horikoshii OT3.</title>
        <authorList>
            <person name="Kawarabayasi Y."/>
            <person name="Sawada M."/>
            <person name="Horikawa H."/>
            <person name="Haikawa Y."/>
            <person name="Hino Y."/>
            <person name="Yamamoto S."/>
            <person name="Sekine M."/>
            <person name="Baba S."/>
            <person name="Kosugi H."/>
            <person name="Hosoyama A."/>
            <person name="Nagai Y."/>
            <person name="Sakai M."/>
            <person name="Ogura K."/>
            <person name="Otsuka R."/>
            <person name="Nakazawa H."/>
            <person name="Takamiya M."/>
            <person name="Ohfuku Y."/>
            <person name="Funahashi T."/>
            <person name="Tanaka T."/>
            <person name="Kudoh Y."/>
            <person name="Yamazaki J."/>
            <person name="Kushida N."/>
            <person name="Oguchi A."/>
            <person name="Aoki K."/>
            <person name="Yoshizawa T."/>
            <person name="Nakamura Y."/>
            <person name="Robb F.T."/>
            <person name="Horikoshi K."/>
            <person name="Masuchi Y."/>
            <person name="Shizuya H."/>
            <person name="Kikuchi H."/>
        </authorList>
    </citation>
    <scope>NUCLEOTIDE SEQUENCE [LARGE SCALE GENOMIC DNA]</scope>
    <source>
        <strain>ATCC 700860 / DSM 12428 / JCM 9974 / NBRC 100139 / OT-3</strain>
    </source>
</reference>
<sequence length="556" mass="64195">MPKFDVSKSDLERLIGRSFSIEEWEDLVLYAKCELDDVWEENGKVYFKLDSKDTNRPDLWSAEGVARQIKWALGIEKGLPKYEVKKSNVTVYVDEKLKDIRPYGVYAIVEGLRLDEDSLSQMIQLQEKIALTFGRRRREVAIGIFDFDKIKPPIYYKAAEKTEKFAPLGYKEEMTLEEILEKHEKGREYGHLIKDKQFYPLLIDSEGNVLSMPPIINSEFTGRVTTDTKNVFIDVTGWKLEKVMLALNVMVTALAERGGKIRSVRVVYKDFEIETPDLTPKEFEVELDYIRKLSGLELNDGEIKELLEKMMYEVEISRGRAKLKYPAFRDDIMHARDILEDVLIAYGYNNIEPEEPKLAVQGRGDPFKDFEDAIRDLMVGFGLQEVMTFNLTNKEVQFKKMNIPEEEIVEIANPISQRWSALRKWILPSLMEFLSNNTHEEYPQRIFEVGLATLIDESRETKTVSEPKLAVALAGTGYTFTNAKEILDALMRHLGFEYEIEEVEHGSFIPGRAGKIIVNGRDIGIIGEVHPQVLENWNIEVPVVAFEIFLRPLYRH</sequence>
<comment type="catalytic activity">
    <reaction evidence="1">
        <text>tRNA(Phe) + L-phenylalanine + ATP = L-phenylalanyl-tRNA(Phe) + AMP + diphosphate + H(+)</text>
        <dbReference type="Rhea" id="RHEA:19413"/>
        <dbReference type="Rhea" id="RHEA-COMP:9668"/>
        <dbReference type="Rhea" id="RHEA-COMP:9699"/>
        <dbReference type="ChEBI" id="CHEBI:15378"/>
        <dbReference type="ChEBI" id="CHEBI:30616"/>
        <dbReference type="ChEBI" id="CHEBI:33019"/>
        <dbReference type="ChEBI" id="CHEBI:58095"/>
        <dbReference type="ChEBI" id="CHEBI:78442"/>
        <dbReference type="ChEBI" id="CHEBI:78531"/>
        <dbReference type="ChEBI" id="CHEBI:456215"/>
        <dbReference type="EC" id="6.1.1.20"/>
    </reaction>
</comment>
<comment type="cofactor">
    <cofactor evidence="1">
        <name>Mg(2+)</name>
        <dbReference type="ChEBI" id="CHEBI:18420"/>
    </cofactor>
</comment>
<comment type="subunit">
    <text evidence="1">Tetramer of two alpha and two beta subunits.</text>
</comment>
<comment type="subcellular location">
    <subcellularLocation>
        <location evidence="1">Cytoplasm</location>
    </subcellularLocation>
</comment>
<comment type="similarity">
    <text evidence="1 2">Belongs to the phenylalanyl-tRNA synthetase beta subunit family. Type 2 subfamily.</text>
</comment>
<feature type="chain" id="PRO_0000127009" description="Phenylalanine--tRNA ligase beta subunit">
    <location>
        <begin position="1"/>
        <end position="556"/>
    </location>
</feature>
<feature type="domain" description="B5" evidence="1">
    <location>
        <begin position="278"/>
        <end position="353"/>
    </location>
</feature>
<feature type="binding site" evidence="1">
    <location>
        <position position="331"/>
    </location>
    <ligand>
        <name>Mg(2+)</name>
        <dbReference type="ChEBI" id="CHEBI:18420"/>
        <note>shared with alpha subunit</note>
    </ligand>
</feature>
<feature type="binding site" evidence="1">
    <location>
        <position position="337"/>
    </location>
    <ligand>
        <name>Mg(2+)</name>
        <dbReference type="ChEBI" id="CHEBI:18420"/>
        <note>shared with alpha subunit</note>
    </ligand>
</feature>
<feature type="binding site" evidence="1">
    <location>
        <position position="340"/>
    </location>
    <ligand>
        <name>Mg(2+)</name>
        <dbReference type="ChEBI" id="CHEBI:18420"/>
        <note>shared with alpha subunit</note>
    </ligand>
</feature>
<feature type="binding site" evidence="1">
    <location>
        <position position="341"/>
    </location>
    <ligand>
        <name>Mg(2+)</name>
        <dbReference type="ChEBI" id="CHEBI:18420"/>
        <note>shared with alpha subunit</note>
    </ligand>
</feature>
<feature type="strand" evidence="3">
    <location>
        <begin position="3"/>
        <end position="7"/>
    </location>
</feature>
<feature type="helix" evidence="3">
    <location>
        <begin position="8"/>
        <end position="15"/>
    </location>
</feature>
<feature type="helix" evidence="3">
    <location>
        <begin position="21"/>
        <end position="30"/>
    </location>
</feature>
<feature type="strand" evidence="3">
    <location>
        <begin position="33"/>
        <end position="41"/>
    </location>
</feature>
<feature type="strand" evidence="3">
    <location>
        <begin position="44"/>
        <end position="51"/>
    </location>
</feature>
<feature type="helix" evidence="3">
    <location>
        <begin position="57"/>
        <end position="59"/>
    </location>
</feature>
<feature type="helix" evidence="3">
    <location>
        <begin position="62"/>
        <end position="72"/>
    </location>
</feature>
<feature type="strand" evidence="3">
    <location>
        <begin position="84"/>
        <end position="93"/>
    </location>
</feature>
<feature type="helix" evidence="3">
    <location>
        <begin position="95"/>
        <end position="97"/>
    </location>
</feature>
<feature type="turn" evidence="3">
    <location>
        <begin position="98"/>
        <end position="100"/>
    </location>
</feature>
<feature type="strand" evidence="3">
    <location>
        <begin position="103"/>
        <end position="111"/>
    </location>
</feature>
<feature type="helix" evidence="3">
    <location>
        <begin position="116"/>
        <end position="131"/>
    </location>
</feature>
<feature type="turn" evidence="3">
    <location>
        <begin position="132"/>
        <end position="138"/>
    </location>
</feature>
<feature type="strand" evidence="3">
    <location>
        <begin position="139"/>
        <end position="146"/>
    </location>
</feature>
<feature type="helix" evidence="3">
    <location>
        <begin position="147"/>
        <end position="149"/>
    </location>
</feature>
<feature type="strand" evidence="3">
    <location>
        <begin position="152"/>
        <end position="159"/>
    </location>
</feature>
<feature type="helix" evidence="3">
    <location>
        <begin position="176"/>
        <end position="182"/>
    </location>
</feature>
<feature type="helix" evidence="3">
    <location>
        <begin position="184"/>
        <end position="189"/>
    </location>
</feature>
<feature type="helix" evidence="3">
    <location>
        <begin position="190"/>
        <end position="192"/>
    </location>
</feature>
<feature type="turn" evidence="3">
    <location>
        <begin position="193"/>
        <end position="195"/>
    </location>
</feature>
<feature type="strand" evidence="3">
    <location>
        <begin position="196"/>
        <end position="204"/>
    </location>
</feature>
<feature type="strand" evidence="3">
    <location>
        <begin position="209"/>
        <end position="212"/>
    </location>
</feature>
<feature type="turn" evidence="3">
    <location>
        <begin position="213"/>
        <end position="215"/>
    </location>
</feature>
<feature type="strand" evidence="3">
    <location>
        <begin position="216"/>
        <end position="222"/>
    </location>
</feature>
<feature type="strand" evidence="3">
    <location>
        <begin position="230"/>
        <end position="238"/>
    </location>
</feature>
<feature type="helix" evidence="3">
    <location>
        <begin position="240"/>
        <end position="255"/>
    </location>
</feature>
<feature type="turn" evidence="3">
    <location>
        <begin position="256"/>
        <end position="258"/>
    </location>
</feature>
<feature type="strand" evidence="3">
    <location>
        <begin position="260"/>
        <end position="267"/>
    </location>
</feature>
<feature type="strand" evidence="3">
    <location>
        <begin position="272"/>
        <end position="275"/>
    </location>
</feature>
<feature type="strand" evidence="3">
    <location>
        <begin position="281"/>
        <end position="286"/>
    </location>
</feature>
<feature type="helix" evidence="3">
    <location>
        <begin position="287"/>
        <end position="294"/>
    </location>
</feature>
<feature type="helix" evidence="3">
    <location>
        <begin position="300"/>
        <end position="309"/>
    </location>
</feature>
<feature type="strand" evidence="3">
    <location>
        <begin position="313"/>
        <end position="317"/>
    </location>
</feature>
<feature type="strand" evidence="3">
    <location>
        <begin position="320"/>
        <end position="325"/>
    </location>
</feature>
<feature type="helix" evidence="3">
    <location>
        <begin position="335"/>
        <end position="346"/>
    </location>
</feature>
<proteinExistence type="evidence at protein level"/>